<comment type="function">
    <text evidence="1">Specifically methylates the N4 position of cytidine in position 1402 (C1402) of 16S rRNA.</text>
</comment>
<comment type="catalytic activity">
    <reaction evidence="1">
        <text>cytidine(1402) in 16S rRNA + S-adenosyl-L-methionine = N(4)-methylcytidine(1402) in 16S rRNA + S-adenosyl-L-homocysteine + H(+)</text>
        <dbReference type="Rhea" id="RHEA:42928"/>
        <dbReference type="Rhea" id="RHEA-COMP:10286"/>
        <dbReference type="Rhea" id="RHEA-COMP:10287"/>
        <dbReference type="ChEBI" id="CHEBI:15378"/>
        <dbReference type="ChEBI" id="CHEBI:57856"/>
        <dbReference type="ChEBI" id="CHEBI:59789"/>
        <dbReference type="ChEBI" id="CHEBI:74506"/>
        <dbReference type="ChEBI" id="CHEBI:82748"/>
        <dbReference type="EC" id="2.1.1.199"/>
    </reaction>
</comment>
<comment type="subcellular location">
    <subcellularLocation>
        <location evidence="1">Cytoplasm</location>
    </subcellularLocation>
</comment>
<comment type="similarity">
    <text evidence="1">Belongs to the methyltransferase superfamily. RsmH family.</text>
</comment>
<comment type="sequence caution" evidence="2">
    <conflict type="erroneous initiation">
        <sequence resource="EMBL-CDS" id="EAT97839"/>
    </conflict>
</comment>
<accession>A7ZD05</accession>
<name>RSMH_CAMC1</name>
<organism>
    <name type="scientific">Campylobacter concisus (strain 13826)</name>
    <dbReference type="NCBI Taxonomy" id="360104"/>
    <lineage>
        <taxon>Bacteria</taxon>
        <taxon>Pseudomonadati</taxon>
        <taxon>Campylobacterota</taxon>
        <taxon>Epsilonproteobacteria</taxon>
        <taxon>Campylobacterales</taxon>
        <taxon>Campylobacteraceae</taxon>
        <taxon>Campylobacter</taxon>
    </lineage>
</organism>
<dbReference type="EC" id="2.1.1.199" evidence="1"/>
<dbReference type="EMBL" id="CP000792">
    <property type="protein sequence ID" value="EAT97839.1"/>
    <property type="status" value="ALT_INIT"/>
    <property type="molecule type" value="Genomic_DNA"/>
</dbReference>
<dbReference type="RefSeq" id="WP_048809796.1">
    <property type="nucleotide sequence ID" value="NC_009802.2"/>
</dbReference>
<dbReference type="SMR" id="A7ZD05"/>
<dbReference type="STRING" id="360104.CCC13826_1083"/>
<dbReference type="KEGG" id="cco:CCC13826_1083"/>
<dbReference type="eggNOG" id="COG0275">
    <property type="taxonomic scope" value="Bacteria"/>
</dbReference>
<dbReference type="HOGENOM" id="CLU_038422_3_0_7"/>
<dbReference type="OrthoDB" id="9806637at2"/>
<dbReference type="Proteomes" id="UP000001121">
    <property type="component" value="Chromosome"/>
</dbReference>
<dbReference type="GO" id="GO:0005737">
    <property type="term" value="C:cytoplasm"/>
    <property type="evidence" value="ECO:0007669"/>
    <property type="project" value="UniProtKB-SubCell"/>
</dbReference>
<dbReference type="GO" id="GO:0071424">
    <property type="term" value="F:rRNA (cytosine-N4-)-methyltransferase activity"/>
    <property type="evidence" value="ECO:0007669"/>
    <property type="project" value="UniProtKB-UniRule"/>
</dbReference>
<dbReference type="GO" id="GO:0070475">
    <property type="term" value="P:rRNA base methylation"/>
    <property type="evidence" value="ECO:0007669"/>
    <property type="project" value="UniProtKB-UniRule"/>
</dbReference>
<dbReference type="Gene3D" id="1.10.150.170">
    <property type="entry name" value="Putative methyltransferase TM0872, insert domain"/>
    <property type="match status" value="1"/>
</dbReference>
<dbReference type="Gene3D" id="3.40.50.150">
    <property type="entry name" value="Vaccinia Virus protein VP39"/>
    <property type="match status" value="1"/>
</dbReference>
<dbReference type="HAMAP" id="MF_01007">
    <property type="entry name" value="16SrRNA_methyltr_H"/>
    <property type="match status" value="1"/>
</dbReference>
<dbReference type="InterPro" id="IPR002903">
    <property type="entry name" value="RsmH"/>
</dbReference>
<dbReference type="InterPro" id="IPR023397">
    <property type="entry name" value="SAM-dep_MeTrfase_MraW_recog"/>
</dbReference>
<dbReference type="InterPro" id="IPR029063">
    <property type="entry name" value="SAM-dependent_MTases_sf"/>
</dbReference>
<dbReference type="NCBIfam" id="TIGR00006">
    <property type="entry name" value="16S rRNA (cytosine(1402)-N(4))-methyltransferase RsmH"/>
    <property type="match status" value="1"/>
</dbReference>
<dbReference type="PANTHER" id="PTHR11265:SF0">
    <property type="entry name" value="12S RRNA N4-METHYLCYTIDINE METHYLTRANSFERASE"/>
    <property type="match status" value="1"/>
</dbReference>
<dbReference type="PANTHER" id="PTHR11265">
    <property type="entry name" value="S-ADENOSYL-METHYLTRANSFERASE MRAW"/>
    <property type="match status" value="1"/>
</dbReference>
<dbReference type="Pfam" id="PF01795">
    <property type="entry name" value="Methyltransf_5"/>
    <property type="match status" value="1"/>
</dbReference>
<dbReference type="PIRSF" id="PIRSF004486">
    <property type="entry name" value="MraW"/>
    <property type="match status" value="1"/>
</dbReference>
<dbReference type="SUPFAM" id="SSF81799">
    <property type="entry name" value="Putative methyltransferase TM0872, insert domain"/>
    <property type="match status" value="1"/>
</dbReference>
<dbReference type="SUPFAM" id="SSF53335">
    <property type="entry name" value="S-adenosyl-L-methionine-dependent methyltransferases"/>
    <property type="match status" value="1"/>
</dbReference>
<proteinExistence type="inferred from homology"/>
<sequence>MQSPHISVLLDEVLSFFKDLRGNFIDCTLGYAGHSSAILSQNENLNLIACDKDIEAINFSLKKLEPFGSRVKIYKSNFSELISKLSSDEISNVRGILADIGVSSLQIDKDDRGFGLGSSALDMRMDKERGFSAYDVVNGYSFDELVRIFRDYGELKNASGIANKIINARNLGEITSAKELANIIGIAQIKGRGVSPAILAFQAIRIEVNGELDELTNLLDSIEKGGFKDCLVTIITFHSLEDRIVKERFKKWANSCICPPGIYRCECGNNHELGEILTKKPLTASQSELAQNSRSKSAKLRVFKIKG</sequence>
<keyword id="KW-0963">Cytoplasm</keyword>
<keyword id="KW-0489">Methyltransferase</keyword>
<keyword id="KW-0698">rRNA processing</keyword>
<keyword id="KW-0949">S-adenosyl-L-methionine</keyword>
<keyword id="KW-0808">Transferase</keyword>
<gene>
    <name evidence="1" type="primary">rsmH</name>
    <name type="synonym">mraW</name>
    <name type="ordered locus">Ccon26_07890</name>
    <name type="ORF">CCC13826_1083</name>
</gene>
<reference key="1">
    <citation type="submission" date="2007-10" db="EMBL/GenBank/DDBJ databases">
        <title>Genome sequence of Campylobacter concisus 13826 isolated from human feces.</title>
        <authorList>
            <person name="Fouts D.E."/>
            <person name="Mongodin E.F."/>
            <person name="Puiu D."/>
            <person name="Sebastian Y."/>
            <person name="Miller W.G."/>
            <person name="Mandrell R.E."/>
            <person name="On S."/>
            <person name="Nelson K.E."/>
        </authorList>
    </citation>
    <scope>NUCLEOTIDE SEQUENCE [LARGE SCALE GENOMIC DNA]</scope>
    <source>
        <strain>13826</strain>
    </source>
</reference>
<protein>
    <recommendedName>
        <fullName evidence="1">Ribosomal RNA small subunit methyltransferase H</fullName>
        <ecNumber evidence="1">2.1.1.199</ecNumber>
    </recommendedName>
    <alternativeName>
        <fullName evidence="1">16S rRNA m(4)C1402 methyltransferase</fullName>
    </alternativeName>
    <alternativeName>
        <fullName evidence="1">rRNA (cytosine-N(4)-)-methyltransferase RsmH</fullName>
    </alternativeName>
</protein>
<evidence type="ECO:0000255" key="1">
    <source>
        <dbReference type="HAMAP-Rule" id="MF_01007"/>
    </source>
</evidence>
<evidence type="ECO:0000305" key="2"/>
<feature type="chain" id="PRO_0000386784" description="Ribosomal RNA small subunit methyltransferase H">
    <location>
        <begin position="1"/>
        <end position="307"/>
    </location>
</feature>
<feature type="binding site" evidence="1">
    <location>
        <begin position="32"/>
        <end position="34"/>
    </location>
    <ligand>
        <name>S-adenosyl-L-methionine</name>
        <dbReference type="ChEBI" id="CHEBI:59789"/>
    </ligand>
</feature>
<feature type="binding site" evidence="1">
    <location>
        <position position="51"/>
    </location>
    <ligand>
        <name>S-adenosyl-L-methionine</name>
        <dbReference type="ChEBI" id="CHEBI:59789"/>
    </ligand>
</feature>
<feature type="binding site" evidence="1">
    <location>
        <position position="82"/>
    </location>
    <ligand>
        <name>S-adenosyl-L-methionine</name>
        <dbReference type="ChEBI" id="CHEBI:59789"/>
    </ligand>
</feature>
<feature type="binding site" evidence="1">
    <location>
        <position position="99"/>
    </location>
    <ligand>
        <name>S-adenosyl-L-methionine</name>
        <dbReference type="ChEBI" id="CHEBI:59789"/>
    </ligand>
</feature>
<feature type="binding site" evidence="1">
    <location>
        <position position="106"/>
    </location>
    <ligand>
        <name>S-adenosyl-L-methionine</name>
        <dbReference type="ChEBI" id="CHEBI:59789"/>
    </ligand>
</feature>